<gene>
    <name evidence="1" type="primary">recA</name>
    <name type="ordered locus">HD_0410</name>
</gene>
<evidence type="ECO:0000255" key="1">
    <source>
        <dbReference type="HAMAP-Rule" id="MF_00268"/>
    </source>
</evidence>
<reference key="1">
    <citation type="submission" date="2003-06" db="EMBL/GenBank/DDBJ databases">
        <title>The complete genome sequence of Haemophilus ducreyi.</title>
        <authorList>
            <person name="Munson R.S. Jr."/>
            <person name="Ray W.C."/>
            <person name="Mahairas G."/>
            <person name="Sabo P."/>
            <person name="Mungur R."/>
            <person name="Johnson L."/>
            <person name="Nguyen D."/>
            <person name="Wang J."/>
            <person name="Forst C."/>
            <person name="Hood L."/>
        </authorList>
    </citation>
    <scope>NUCLEOTIDE SEQUENCE [LARGE SCALE GENOMIC DNA]</scope>
    <source>
        <strain>35000HP / ATCC 700724</strain>
    </source>
</reference>
<organism>
    <name type="scientific">Haemophilus ducreyi (strain 35000HP / ATCC 700724)</name>
    <dbReference type="NCBI Taxonomy" id="233412"/>
    <lineage>
        <taxon>Bacteria</taxon>
        <taxon>Pseudomonadati</taxon>
        <taxon>Pseudomonadota</taxon>
        <taxon>Gammaproteobacteria</taxon>
        <taxon>Pasteurellales</taxon>
        <taxon>Pasteurellaceae</taxon>
        <taxon>Haemophilus</taxon>
    </lineage>
</organism>
<comment type="function">
    <text evidence="1">Can catalyze the hydrolysis of ATP in the presence of single-stranded DNA, the ATP-dependent uptake of single-stranded DNA by duplex DNA, and the ATP-dependent hybridization of homologous single-stranded DNAs. It interacts with LexA causing its activation and leading to its autocatalytic cleavage.</text>
</comment>
<comment type="subcellular location">
    <subcellularLocation>
        <location evidence="1">Cytoplasm</location>
    </subcellularLocation>
</comment>
<comment type="similarity">
    <text evidence="1">Belongs to the RecA family.</text>
</comment>
<keyword id="KW-0067">ATP-binding</keyword>
<keyword id="KW-0963">Cytoplasm</keyword>
<keyword id="KW-0227">DNA damage</keyword>
<keyword id="KW-0233">DNA recombination</keyword>
<keyword id="KW-0234">DNA repair</keyword>
<keyword id="KW-0238">DNA-binding</keyword>
<keyword id="KW-0547">Nucleotide-binding</keyword>
<keyword id="KW-1185">Reference proteome</keyword>
<keyword id="KW-0742">SOS response</keyword>
<proteinExistence type="inferred from homology"/>
<sequence>MAADKKAQKNTATKQIDPEQKEKALAAALAQIEKQFGKGSIMRLGDTQALDIEAVSTGSIGLDAALGIGGLPMGRIVEIYGPESSGKTTLTLSVIAQAQRIGKTCAFIDAEHALDPVYARKLGVDIDALLISQPDNGEQALEICDALVRSGAVDVIIVDSVAALTPKAEIEGDMGDSYMGLQARLMSQALRKLTANIKATNCLVVFINQIRMKIGVMFGNPETTTGGNALKFYASVRLDIRRSGVVKDGDEVVGSETKVKIVKNKVAPPFREVQFDIMYGEGIARMNELLILAEANGFIQKAGAWFSYNGTKIGQGKNNAIKWLKENPEVAEKIEQEIRNLLILTPDQPASEKLELDVNDESDFDEAFEEQE</sequence>
<protein>
    <recommendedName>
        <fullName evidence="1">Protein RecA</fullName>
    </recommendedName>
    <alternativeName>
        <fullName evidence="1">Recombinase A</fullName>
    </alternativeName>
</protein>
<accession>Q7VNS7</accession>
<dbReference type="EMBL" id="AE017143">
    <property type="protein sequence ID" value="AAP95375.1"/>
    <property type="molecule type" value="Genomic_DNA"/>
</dbReference>
<dbReference type="SMR" id="Q7VNS7"/>
<dbReference type="STRING" id="233412.HD_0410"/>
<dbReference type="KEGG" id="hdu:HD_0410"/>
<dbReference type="eggNOG" id="COG0468">
    <property type="taxonomic scope" value="Bacteria"/>
</dbReference>
<dbReference type="HOGENOM" id="CLU_040469_3_2_6"/>
<dbReference type="OrthoDB" id="9776733at2"/>
<dbReference type="Proteomes" id="UP000001022">
    <property type="component" value="Chromosome"/>
</dbReference>
<dbReference type="GO" id="GO:0005829">
    <property type="term" value="C:cytosol"/>
    <property type="evidence" value="ECO:0007669"/>
    <property type="project" value="TreeGrafter"/>
</dbReference>
<dbReference type="GO" id="GO:0005524">
    <property type="term" value="F:ATP binding"/>
    <property type="evidence" value="ECO:0007669"/>
    <property type="project" value="UniProtKB-UniRule"/>
</dbReference>
<dbReference type="GO" id="GO:0016887">
    <property type="term" value="F:ATP hydrolysis activity"/>
    <property type="evidence" value="ECO:0007669"/>
    <property type="project" value="InterPro"/>
</dbReference>
<dbReference type="GO" id="GO:0140664">
    <property type="term" value="F:ATP-dependent DNA damage sensor activity"/>
    <property type="evidence" value="ECO:0007669"/>
    <property type="project" value="InterPro"/>
</dbReference>
<dbReference type="GO" id="GO:0003684">
    <property type="term" value="F:damaged DNA binding"/>
    <property type="evidence" value="ECO:0007669"/>
    <property type="project" value="UniProtKB-UniRule"/>
</dbReference>
<dbReference type="GO" id="GO:0003697">
    <property type="term" value="F:single-stranded DNA binding"/>
    <property type="evidence" value="ECO:0007669"/>
    <property type="project" value="UniProtKB-UniRule"/>
</dbReference>
<dbReference type="GO" id="GO:0006310">
    <property type="term" value="P:DNA recombination"/>
    <property type="evidence" value="ECO:0007669"/>
    <property type="project" value="UniProtKB-UniRule"/>
</dbReference>
<dbReference type="GO" id="GO:0006281">
    <property type="term" value="P:DNA repair"/>
    <property type="evidence" value="ECO:0007669"/>
    <property type="project" value="UniProtKB-UniRule"/>
</dbReference>
<dbReference type="GO" id="GO:0009432">
    <property type="term" value="P:SOS response"/>
    <property type="evidence" value="ECO:0007669"/>
    <property type="project" value="UniProtKB-UniRule"/>
</dbReference>
<dbReference type="CDD" id="cd00983">
    <property type="entry name" value="RecA"/>
    <property type="match status" value="1"/>
</dbReference>
<dbReference type="FunFam" id="3.40.50.300:FF:000087">
    <property type="entry name" value="Recombinase RecA"/>
    <property type="match status" value="1"/>
</dbReference>
<dbReference type="Gene3D" id="3.40.50.300">
    <property type="entry name" value="P-loop containing nucleotide triphosphate hydrolases"/>
    <property type="match status" value="1"/>
</dbReference>
<dbReference type="HAMAP" id="MF_00268">
    <property type="entry name" value="RecA"/>
    <property type="match status" value="1"/>
</dbReference>
<dbReference type="InterPro" id="IPR003593">
    <property type="entry name" value="AAA+_ATPase"/>
</dbReference>
<dbReference type="InterPro" id="IPR013765">
    <property type="entry name" value="DNA_recomb/repair_RecA"/>
</dbReference>
<dbReference type="InterPro" id="IPR020584">
    <property type="entry name" value="DNA_recomb/repair_RecA_CS"/>
</dbReference>
<dbReference type="InterPro" id="IPR027417">
    <property type="entry name" value="P-loop_NTPase"/>
</dbReference>
<dbReference type="InterPro" id="IPR049261">
    <property type="entry name" value="RecA-like_C"/>
</dbReference>
<dbReference type="InterPro" id="IPR049428">
    <property type="entry name" value="RecA-like_N"/>
</dbReference>
<dbReference type="InterPro" id="IPR020588">
    <property type="entry name" value="RecA_ATP-bd"/>
</dbReference>
<dbReference type="InterPro" id="IPR023400">
    <property type="entry name" value="RecA_C_sf"/>
</dbReference>
<dbReference type="InterPro" id="IPR020587">
    <property type="entry name" value="RecA_monomer-monomer_interface"/>
</dbReference>
<dbReference type="NCBIfam" id="TIGR02012">
    <property type="entry name" value="tigrfam_recA"/>
    <property type="match status" value="1"/>
</dbReference>
<dbReference type="PANTHER" id="PTHR45900:SF1">
    <property type="entry name" value="MITOCHONDRIAL DNA REPAIR PROTEIN RECA HOMOLOG-RELATED"/>
    <property type="match status" value="1"/>
</dbReference>
<dbReference type="PANTHER" id="PTHR45900">
    <property type="entry name" value="RECA"/>
    <property type="match status" value="1"/>
</dbReference>
<dbReference type="Pfam" id="PF00154">
    <property type="entry name" value="RecA"/>
    <property type="match status" value="1"/>
</dbReference>
<dbReference type="Pfam" id="PF21096">
    <property type="entry name" value="RecA_C"/>
    <property type="match status" value="1"/>
</dbReference>
<dbReference type="PRINTS" id="PR00142">
    <property type="entry name" value="RECA"/>
</dbReference>
<dbReference type="SMART" id="SM00382">
    <property type="entry name" value="AAA"/>
    <property type="match status" value="1"/>
</dbReference>
<dbReference type="SUPFAM" id="SSF52540">
    <property type="entry name" value="P-loop containing nucleoside triphosphate hydrolases"/>
    <property type="match status" value="1"/>
</dbReference>
<dbReference type="SUPFAM" id="SSF54752">
    <property type="entry name" value="RecA protein, C-terminal domain"/>
    <property type="match status" value="1"/>
</dbReference>
<dbReference type="PROSITE" id="PS00321">
    <property type="entry name" value="RECA_1"/>
    <property type="match status" value="1"/>
</dbReference>
<dbReference type="PROSITE" id="PS50162">
    <property type="entry name" value="RECA_2"/>
    <property type="match status" value="1"/>
</dbReference>
<dbReference type="PROSITE" id="PS50163">
    <property type="entry name" value="RECA_3"/>
    <property type="match status" value="1"/>
</dbReference>
<feature type="chain" id="PRO_0000122721" description="Protein RecA">
    <location>
        <begin position="1"/>
        <end position="372"/>
    </location>
</feature>
<feature type="binding site" evidence="1">
    <location>
        <begin position="81"/>
        <end position="88"/>
    </location>
    <ligand>
        <name>ATP</name>
        <dbReference type="ChEBI" id="CHEBI:30616"/>
    </ligand>
</feature>
<name>RECA_HAEDU</name>